<reference key="1">
    <citation type="journal article" date="2009" name="Proc. Natl. Acad. Sci. U.S.A.">
        <title>Hamiltonella defensa, genome evolution of protective bacterial endosymbiont from pathogenic ancestors.</title>
        <authorList>
            <person name="Degnan P.H."/>
            <person name="Yu Y."/>
            <person name="Sisneros N."/>
            <person name="Wing R.A."/>
            <person name="Moran N.A."/>
        </authorList>
    </citation>
    <scope>NUCLEOTIDE SEQUENCE [LARGE SCALE GENOMIC DNA]</scope>
    <source>
        <strain>5AT</strain>
    </source>
</reference>
<sequence length="309" mass="34081">MSNNMIRLATRQSPLALWQAHYVKTGLEFFHPDLKVILLPMVTQGDNILGTALSKTGGKGLFVKELERAVLDNRADIAVHSIKDMPLYFPEGLGLVAVCEREDPRDAFLSLRYHDVAQLPEGSVVGTSSLRRQCQLYKNYPGIVVRDLRGNVGARLKKLDQGDYDAIVLAVAGLKRLGLENRMTQILRPETSLPAAGQGAIGIECRLDDTVTLQRVATLNHRPSQLKISCERALLKRLEGGCQTPIGSYAEIENDELWLRAFVGAPDGQLIIDGERRGNFDSAEKIGFELANELLSRGAEAILAQLNRQ</sequence>
<accession>C4K4E3</accession>
<gene>
    <name evidence="1" type="primary">hemC</name>
    <name type="ordered locus">HDEF_0703</name>
</gene>
<feature type="chain" id="PRO_1000204655" description="Porphobilinogen deaminase">
    <location>
        <begin position="1"/>
        <end position="309"/>
    </location>
</feature>
<feature type="modified residue" description="S-(dipyrrolylmethanemethyl)cysteine" evidence="1">
    <location>
        <position position="242"/>
    </location>
</feature>
<dbReference type="EC" id="2.5.1.61" evidence="1"/>
<dbReference type="EMBL" id="CP001277">
    <property type="protein sequence ID" value="ACQ67436.1"/>
    <property type="molecule type" value="Genomic_DNA"/>
</dbReference>
<dbReference type="RefSeq" id="WP_015873257.1">
    <property type="nucleotide sequence ID" value="NC_012751.1"/>
</dbReference>
<dbReference type="SMR" id="C4K4E3"/>
<dbReference type="STRING" id="572265.HDEF_0703"/>
<dbReference type="GeneID" id="66260558"/>
<dbReference type="KEGG" id="hde:HDEF_0703"/>
<dbReference type="eggNOG" id="COG0181">
    <property type="taxonomic scope" value="Bacteria"/>
</dbReference>
<dbReference type="HOGENOM" id="CLU_019704_0_2_6"/>
<dbReference type="UniPathway" id="UPA00251">
    <property type="reaction ID" value="UER00319"/>
</dbReference>
<dbReference type="Proteomes" id="UP000002334">
    <property type="component" value="Chromosome"/>
</dbReference>
<dbReference type="GO" id="GO:0005737">
    <property type="term" value="C:cytoplasm"/>
    <property type="evidence" value="ECO:0007669"/>
    <property type="project" value="TreeGrafter"/>
</dbReference>
<dbReference type="GO" id="GO:0004418">
    <property type="term" value="F:hydroxymethylbilane synthase activity"/>
    <property type="evidence" value="ECO:0007669"/>
    <property type="project" value="UniProtKB-UniRule"/>
</dbReference>
<dbReference type="GO" id="GO:0006782">
    <property type="term" value="P:protoporphyrinogen IX biosynthetic process"/>
    <property type="evidence" value="ECO:0007669"/>
    <property type="project" value="UniProtKB-UniRule"/>
</dbReference>
<dbReference type="CDD" id="cd13646">
    <property type="entry name" value="PBP2_EcHMBS_like"/>
    <property type="match status" value="1"/>
</dbReference>
<dbReference type="FunFam" id="3.30.160.40:FF:000002">
    <property type="entry name" value="Porphobilinogen deaminase"/>
    <property type="match status" value="1"/>
</dbReference>
<dbReference type="FunFam" id="3.40.190.10:FF:000004">
    <property type="entry name" value="Porphobilinogen deaminase"/>
    <property type="match status" value="1"/>
</dbReference>
<dbReference type="FunFam" id="3.40.190.10:FF:000005">
    <property type="entry name" value="Porphobilinogen deaminase"/>
    <property type="match status" value="1"/>
</dbReference>
<dbReference type="Gene3D" id="3.40.190.10">
    <property type="entry name" value="Periplasmic binding protein-like II"/>
    <property type="match status" value="2"/>
</dbReference>
<dbReference type="Gene3D" id="3.30.160.40">
    <property type="entry name" value="Porphobilinogen deaminase, C-terminal domain"/>
    <property type="match status" value="1"/>
</dbReference>
<dbReference type="HAMAP" id="MF_00260">
    <property type="entry name" value="Porphobil_deam"/>
    <property type="match status" value="1"/>
</dbReference>
<dbReference type="InterPro" id="IPR000860">
    <property type="entry name" value="HemC"/>
</dbReference>
<dbReference type="InterPro" id="IPR022419">
    <property type="entry name" value="Porphobilin_deaminase_cofac_BS"/>
</dbReference>
<dbReference type="InterPro" id="IPR022417">
    <property type="entry name" value="Porphobilin_deaminase_N"/>
</dbReference>
<dbReference type="InterPro" id="IPR022418">
    <property type="entry name" value="Porphobilinogen_deaminase_C"/>
</dbReference>
<dbReference type="InterPro" id="IPR036803">
    <property type="entry name" value="Porphobilinogen_deaminase_C_sf"/>
</dbReference>
<dbReference type="NCBIfam" id="TIGR00212">
    <property type="entry name" value="hemC"/>
    <property type="match status" value="1"/>
</dbReference>
<dbReference type="PANTHER" id="PTHR11557">
    <property type="entry name" value="PORPHOBILINOGEN DEAMINASE"/>
    <property type="match status" value="1"/>
</dbReference>
<dbReference type="PANTHER" id="PTHR11557:SF0">
    <property type="entry name" value="PORPHOBILINOGEN DEAMINASE"/>
    <property type="match status" value="1"/>
</dbReference>
<dbReference type="Pfam" id="PF01379">
    <property type="entry name" value="Porphobil_deam"/>
    <property type="match status" value="1"/>
</dbReference>
<dbReference type="Pfam" id="PF03900">
    <property type="entry name" value="Porphobil_deamC"/>
    <property type="match status" value="1"/>
</dbReference>
<dbReference type="PIRSF" id="PIRSF001438">
    <property type="entry name" value="4pyrrol_synth_OHMeBilane_synth"/>
    <property type="match status" value="1"/>
</dbReference>
<dbReference type="PRINTS" id="PR00151">
    <property type="entry name" value="PORPHBDMNASE"/>
</dbReference>
<dbReference type="SUPFAM" id="SSF53850">
    <property type="entry name" value="Periplasmic binding protein-like II"/>
    <property type="match status" value="1"/>
</dbReference>
<dbReference type="SUPFAM" id="SSF54782">
    <property type="entry name" value="Porphobilinogen deaminase (hydroxymethylbilane synthase), C-terminal domain"/>
    <property type="match status" value="1"/>
</dbReference>
<dbReference type="PROSITE" id="PS00533">
    <property type="entry name" value="PORPHOBILINOGEN_DEAM"/>
    <property type="match status" value="1"/>
</dbReference>
<proteinExistence type="inferred from homology"/>
<evidence type="ECO:0000255" key="1">
    <source>
        <dbReference type="HAMAP-Rule" id="MF_00260"/>
    </source>
</evidence>
<name>HEM3_HAMD5</name>
<organism>
    <name type="scientific">Hamiltonella defensa subsp. Acyrthosiphon pisum (strain 5AT)</name>
    <dbReference type="NCBI Taxonomy" id="572265"/>
    <lineage>
        <taxon>Bacteria</taxon>
        <taxon>Pseudomonadati</taxon>
        <taxon>Pseudomonadota</taxon>
        <taxon>Gammaproteobacteria</taxon>
        <taxon>Enterobacterales</taxon>
        <taxon>Enterobacteriaceae</taxon>
        <taxon>aphid secondary symbionts</taxon>
        <taxon>Candidatus Hamiltonella</taxon>
    </lineage>
</organism>
<protein>
    <recommendedName>
        <fullName evidence="1">Porphobilinogen deaminase</fullName>
        <shortName evidence="1">PBG</shortName>
        <ecNumber evidence="1">2.5.1.61</ecNumber>
    </recommendedName>
    <alternativeName>
        <fullName evidence="1">Hydroxymethylbilane synthase</fullName>
        <shortName evidence="1">HMBS</shortName>
    </alternativeName>
    <alternativeName>
        <fullName evidence="1">Pre-uroporphyrinogen synthase</fullName>
    </alternativeName>
</protein>
<keyword id="KW-0627">Porphyrin biosynthesis</keyword>
<keyword id="KW-0808">Transferase</keyword>
<comment type="function">
    <text evidence="1">Tetrapolymerization of the monopyrrole PBG into the hydroxymethylbilane pre-uroporphyrinogen in several discrete steps.</text>
</comment>
<comment type="catalytic activity">
    <reaction evidence="1">
        <text>4 porphobilinogen + H2O = hydroxymethylbilane + 4 NH4(+)</text>
        <dbReference type="Rhea" id="RHEA:13185"/>
        <dbReference type="ChEBI" id="CHEBI:15377"/>
        <dbReference type="ChEBI" id="CHEBI:28938"/>
        <dbReference type="ChEBI" id="CHEBI:57845"/>
        <dbReference type="ChEBI" id="CHEBI:58126"/>
        <dbReference type="EC" id="2.5.1.61"/>
    </reaction>
</comment>
<comment type="cofactor">
    <cofactor evidence="1">
        <name>dipyrromethane</name>
        <dbReference type="ChEBI" id="CHEBI:60342"/>
    </cofactor>
    <text evidence="1">Binds 1 dipyrromethane group covalently.</text>
</comment>
<comment type="pathway">
    <text evidence="1">Porphyrin-containing compound metabolism; protoporphyrin-IX biosynthesis; coproporphyrinogen-III from 5-aminolevulinate: step 2/4.</text>
</comment>
<comment type="subunit">
    <text evidence="1">Monomer.</text>
</comment>
<comment type="miscellaneous">
    <text evidence="1">The porphobilinogen subunits are added to the dipyrromethane group.</text>
</comment>
<comment type="similarity">
    <text evidence="1">Belongs to the HMBS family.</text>
</comment>